<gene>
    <name type="ordered locus">FTA_0979</name>
</gene>
<reference key="1">
    <citation type="journal article" date="2009" name="PLoS ONE">
        <title>Complete genome sequence of Francisella tularensis subspecies holarctica FTNF002-00.</title>
        <authorList>
            <person name="Barabote R.D."/>
            <person name="Xie G."/>
            <person name="Brettin T.S."/>
            <person name="Hinrichs S.H."/>
            <person name="Fey P.D."/>
            <person name="Jay J.J."/>
            <person name="Engle J.L."/>
            <person name="Godbole S.D."/>
            <person name="Noronha J.M."/>
            <person name="Scheuermann R.H."/>
            <person name="Zhou L.W."/>
            <person name="Lion C."/>
            <person name="Dempsey M.P."/>
        </authorList>
    </citation>
    <scope>NUCLEOTIDE SEQUENCE [LARGE SCALE GENOMIC DNA]</scope>
    <source>
        <strain>FTNF002-00 / FTA</strain>
    </source>
</reference>
<protein>
    <recommendedName>
        <fullName evidence="1">Probable transcriptional regulatory protein FTA_0979</fullName>
    </recommendedName>
</protein>
<dbReference type="EMBL" id="CP000803">
    <property type="protein sequence ID" value="ABU61455.1"/>
    <property type="molecule type" value="Genomic_DNA"/>
</dbReference>
<dbReference type="RefSeq" id="WP_003015700.1">
    <property type="nucleotide sequence ID" value="NC_009749.1"/>
</dbReference>
<dbReference type="SMR" id="A7NBV2"/>
<dbReference type="KEGG" id="fta:FTA_0979"/>
<dbReference type="HOGENOM" id="CLU_062974_2_2_6"/>
<dbReference type="GO" id="GO:0005829">
    <property type="term" value="C:cytosol"/>
    <property type="evidence" value="ECO:0007669"/>
    <property type="project" value="TreeGrafter"/>
</dbReference>
<dbReference type="GO" id="GO:0003677">
    <property type="term" value="F:DNA binding"/>
    <property type="evidence" value="ECO:0007669"/>
    <property type="project" value="UniProtKB-UniRule"/>
</dbReference>
<dbReference type="GO" id="GO:0006355">
    <property type="term" value="P:regulation of DNA-templated transcription"/>
    <property type="evidence" value="ECO:0007669"/>
    <property type="project" value="UniProtKB-UniRule"/>
</dbReference>
<dbReference type="FunFam" id="1.10.10.200:FF:000001">
    <property type="entry name" value="Probable transcriptional regulatory protein YebC"/>
    <property type="match status" value="1"/>
</dbReference>
<dbReference type="FunFam" id="3.30.70.980:FF:000002">
    <property type="entry name" value="Probable transcriptional regulatory protein YebC"/>
    <property type="match status" value="1"/>
</dbReference>
<dbReference type="Gene3D" id="1.10.10.200">
    <property type="match status" value="1"/>
</dbReference>
<dbReference type="Gene3D" id="3.30.70.980">
    <property type="match status" value="2"/>
</dbReference>
<dbReference type="HAMAP" id="MF_00693">
    <property type="entry name" value="Transcrip_reg_TACO1"/>
    <property type="match status" value="1"/>
</dbReference>
<dbReference type="InterPro" id="IPR017856">
    <property type="entry name" value="Integrase-like_N"/>
</dbReference>
<dbReference type="InterPro" id="IPR048300">
    <property type="entry name" value="TACO1_YebC-like_2nd/3rd_dom"/>
</dbReference>
<dbReference type="InterPro" id="IPR049083">
    <property type="entry name" value="TACO1_YebC_N"/>
</dbReference>
<dbReference type="InterPro" id="IPR002876">
    <property type="entry name" value="Transcrip_reg_TACO1-like"/>
</dbReference>
<dbReference type="InterPro" id="IPR026564">
    <property type="entry name" value="Transcrip_reg_TACO1-like_dom3"/>
</dbReference>
<dbReference type="InterPro" id="IPR029072">
    <property type="entry name" value="YebC-like"/>
</dbReference>
<dbReference type="NCBIfam" id="NF001030">
    <property type="entry name" value="PRK00110.1"/>
    <property type="match status" value="1"/>
</dbReference>
<dbReference type="NCBIfam" id="NF009044">
    <property type="entry name" value="PRK12378.1"/>
    <property type="match status" value="1"/>
</dbReference>
<dbReference type="NCBIfam" id="TIGR01033">
    <property type="entry name" value="YebC/PmpR family DNA-binding transcriptional regulator"/>
    <property type="match status" value="1"/>
</dbReference>
<dbReference type="PANTHER" id="PTHR12532:SF6">
    <property type="entry name" value="TRANSCRIPTIONAL REGULATORY PROTEIN YEBC-RELATED"/>
    <property type="match status" value="1"/>
</dbReference>
<dbReference type="PANTHER" id="PTHR12532">
    <property type="entry name" value="TRANSLATIONAL ACTIVATOR OF CYTOCHROME C OXIDASE 1"/>
    <property type="match status" value="1"/>
</dbReference>
<dbReference type="Pfam" id="PF20772">
    <property type="entry name" value="TACO1_YebC_N"/>
    <property type="match status" value="1"/>
</dbReference>
<dbReference type="Pfam" id="PF01709">
    <property type="entry name" value="Transcrip_reg"/>
    <property type="match status" value="1"/>
</dbReference>
<dbReference type="SUPFAM" id="SSF75625">
    <property type="entry name" value="YebC-like"/>
    <property type="match status" value="1"/>
</dbReference>
<evidence type="ECO:0000255" key="1">
    <source>
        <dbReference type="HAMAP-Rule" id="MF_00693"/>
    </source>
</evidence>
<feature type="chain" id="PRO_1000045309" description="Probable transcriptional regulatory protein FTA_0979">
    <location>
        <begin position="1"/>
        <end position="248"/>
    </location>
</feature>
<organism>
    <name type="scientific">Francisella tularensis subsp. holarctica (strain FTNF002-00 / FTA)</name>
    <dbReference type="NCBI Taxonomy" id="458234"/>
    <lineage>
        <taxon>Bacteria</taxon>
        <taxon>Pseudomonadati</taxon>
        <taxon>Pseudomonadota</taxon>
        <taxon>Gammaproteobacteria</taxon>
        <taxon>Thiotrichales</taxon>
        <taxon>Francisellaceae</taxon>
        <taxon>Francisella</taxon>
    </lineage>
</organism>
<sequence>MAGHSKWANIKHKKAKEDAKRGKIFTKLIREITVAARLGGGDKDANPRLRAAIATALANNMSKDTIERAIVKGAGGDESANVEEVRYEGYGPGGVAIIVDCMTDNRNRTVGEVRHAFTKSGGNLGTDGSVAYMFTKRGIISFAPGVDEDALMEVALEAGAEDIITHEDGSIDVYTDPHDFSDIQEVLIEKGFNSENAEVTFDAETKAELDTETAEKVMALIDKLEDLDYVQSVYSNANFTQELIEQIG</sequence>
<comment type="subcellular location">
    <subcellularLocation>
        <location evidence="1">Cytoplasm</location>
    </subcellularLocation>
</comment>
<comment type="similarity">
    <text evidence="1">Belongs to the TACO1 family.</text>
</comment>
<keyword id="KW-0963">Cytoplasm</keyword>
<keyword id="KW-0238">DNA-binding</keyword>
<keyword id="KW-0804">Transcription</keyword>
<keyword id="KW-0805">Transcription regulation</keyword>
<proteinExistence type="inferred from homology"/>
<accession>A7NBV2</accession>
<name>Y979_FRATF</name>